<proteinExistence type="predicted"/>
<evidence type="ECO:0000255" key="1"/>
<evidence type="ECO:0000256" key="2">
    <source>
        <dbReference type="SAM" id="MobiDB-lite"/>
    </source>
</evidence>
<reference key="1">
    <citation type="journal article" date="2003" name="Proc. Natl. Acad. Sci. U.S.A.">
        <title>Complete genome sequence of the Q-fever pathogen, Coxiella burnetii.</title>
        <authorList>
            <person name="Seshadri R."/>
            <person name="Paulsen I.T."/>
            <person name="Eisen J.A."/>
            <person name="Read T.D."/>
            <person name="Nelson K.E."/>
            <person name="Nelson W.C."/>
            <person name="Ward N.L."/>
            <person name="Tettelin H."/>
            <person name="Davidsen T.M."/>
            <person name="Beanan M.J."/>
            <person name="DeBoy R.T."/>
            <person name="Daugherty S.C."/>
            <person name="Brinkac L.M."/>
            <person name="Madupu R."/>
            <person name="Dodson R.J."/>
            <person name="Khouri H.M."/>
            <person name="Lee K.H."/>
            <person name="Carty H.A."/>
            <person name="Scanlan D."/>
            <person name="Heinzen R.A."/>
            <person name="Thompson H.A."/>
            <person name="Samuel J.E."/>
            <person name="Fraser C.M."/>
            <person name="Heidelberg J.F."/>
        </authorList>
    </citation>
    <scope>NUCLEOTIDE SEQUENCE [LARGE SCALE GENOMIC DNA]</scope>
    <source>
        <strain>RSA 493 / Nine Mile phase I</strain>
    </source>
</reference>
<feature type="chain" id="PRO_0000309239" description="Putative ankyrin repeat protein CBU_0781">
    <location>
        <begin position="1"/>
        <end position="338"/>
    </location>
</feature>
<feature type="repeat" description="ANK 1">
    <location>
        <begin position="92"/>
        <end position="124"/>
    </location>
</feature>
<feature type="repeat" description="ANK 2">
    <location>
        <begin position="125"/>
        <end position="157"/>
    </location>
</feature>
<feature type="region of interest" description="Disordered" evidence="2">
    <location>
        <begin position="1"/>
        <end position="31"/>
    </location>
</feature>
<feature type="region of interest" description="Disordered" evidence="2">
    <location>
        <begin position="319"/>
        <end position="338"/>
    </location>
</feature>
<feature type="coiled-coil region" evidence="1">
    <location>
        <begin position="197"/>
        <end position="242"/>
    </location>
</feature>
<feature type="compositionally biased region" description="Low complexity" evidence="2">
    <location>
        <begin position="7"/>
        <end position="19"/>
    </location>
</feature>
<feature type="compositionally biased region" description="Basic residues" evidence="2">
    <location>
        <begin position="20"/>
        <end position="31"/>
    </location>
</feature>
<feature type="compositionally biased region" description="Low complexity" evidence="2">
    <location>
        <begin position="325"/>
        <end position="338"/>
    </location>
</feature>
<organism>
    <name type="scientific">Coxiella burnetii (strain RSA 493 / Nine Mile phase I)</name>
    <dbReference type="NCBI Taxonomy" id="227377"/>
    <lineage>
        <taxon>Bacteria</taxon>
        <taxon>Pseudomonadati</taxon>
        <taxon>Pseudomonadota</taxon>
        <taxon>Gammaproteobacteria</taxon>
        <taxon>Legionellales</taxon>
        <taxon>Coxiellaceae</taxon>
        <taxon>Coxiella</taxon>
    </lineage>
</organism>
<keyword id="KW-0040">ANK repeat</keyword>
<keyword id="KW-0175">Coiled coil</keyword>
<keyword id="KW-1185">Reference proteome</keyword>
<keyword id="KW-0677">Repeat</keyword>
<gene>
    <name type="ordered locus">CBU_0781</name>
</gene>
<protein>
    <recommendedName>
        <fullName>Putative ankyrin repeat protein CBU_0781</fullName>
    </recommendedName>
</protein>
<dbReference type="EMBL" id="AE016828">
    <property type="protein sequence ID" value="AAO90316.1"/>
    <property type="molecule type" value="Genomic_DNA"/>
</dbReference>
<dbReference type="RefSeq" id="NP_819802.1">
    <property type="nucleotide sequence ID" value="NC_002971.4"/>
</dbReference>
<dbReference type="SMR" id="Q83DF6"/>
<dbReference type="IntAct" id="Q83DF6">
    <property type="interactions" value="40"/>
</dbReference>
<dbReference type="MINT" id="Q83DF6"/>
<dbReference type="STRING" id="227377.CBU_0781"/>
<dbReference type="EnsemblBacteria" id="AAO90316">
    <property type="protein sequence ID" value="AAO90316"/>
    <property type="gene ID" value="CBU_0781"/>
</dbReference>
<dbReference type="GeneID" id="1208673"/>
<dbReference type="KEGG" id="cbu:CBU_0781"/>
<dbReference type="PATRIC" id="fig|227377.7.peg.769"/>
<dbReference type="eggNOG" id="COG0666">
    <property type="taxonomic scope" value="Bacteria"/>
</dbReference>
<dbReference type="HOGENOM" id="CLU_070760_0_0_6"/>
<dbReference type="Proteomes" id="UP000002671">
    <property type="component" value="Chromosome"/>
</dbReference>
<dbReference type="GO" id="GO:0052026">
    <property type="term" value="P:symbiont-mediated perturbation of host transcription"/>
    <property type="evidence" value="ECO:0000269"/>
    <property type="project" value="SigSci"/>
</dbReference>
<dbReference type="Gene3D" id="1.25.40.20">
    <property type="entry name" value="Ankyrin repeat-containing domain"/>
    <property type="match status" value="1"/>
</dbReference>
<dbReference type="InterPro" id="IPR002110">
    <property type="entry name" value="Ankyrin_rpt"/>
</dbReference>
<dbReference type="InterPro" id="IPR036770">
    <property type="entry name" value="Ankyrin_rpt-contain_sf"/>
</dbReference>
<dbReference type="PANTHER" id="PTHR24188">
    <property type="entry name" value="ANKYRIN REPEAT PROTEIN"/>
    <property type="match status" value="1"/>
</dbReference>
<dbReference type="PANTHER" id="PTHR24188:SF29">
    <property type="entry name" value="GH09064P"/>
    <property type="match status" value="1"/>
</dbReference>
<dbReference type="Pfam" id="PF12796">
    <property type="entry name" value="Ank_2"/>
    <property type="match status" value="1"/>
</dbReference>
<dbReference type="SMART" id="SM00248">
    <property type="entry name" value="ANK"/>
    <property type="match status" value="2"/>
</dbReference>
<dbReference type="SUPFAM" id="SSF48403">
    <property type="entry name" value="Ankyrin repeat"/>
    <property type="match status" value="1"/>
</dbReference>
<dbReference type="PROSITE" id="PS50297">
    <property type="entry name" value="ANK_REP_REGION"/>
    <property type="match status" value="1"/>
</dbReference>
<dbReference type="PROSITE" id="PS50088">
    <property type="entry name" value="ANK_REPEAT"/>
    <property type="match status" value="1"/>
</dbReference>
<accession>Q83DF6</accession>
<name>Y781_COXBU</name>
<sequence>MSRRETPTSTISSTPTGTRTPRRRLSRKGHPVRRSPLIAKNSIFTVFDLSFEILINAVEENSLDIIKNYLRGDSFHQTAKWGLNVPPKTDFQGDTLLIKAAKKGKFLIAKALLEAGAYKEIVNKLGETALICAVRHFRVETLDLLIQYHADVKIKYKGQNLLELTLEKYSEKTKNFTLRIVQSLVAAGVELWHSDGSQIMASDKEIDEIIRNARNLQIIKKEKREAEERARTKKSKQITLQRIQRDLEYISKRLPFEENILTTPDFPQLFFEISKLVEIISDSQKENKEEFAEASISLIDALKNFGMILEKRDVPGEVKKEDTTLSRNNSLSCLSSPR</sequence>